<sequence length="222" mass="25510">MEVKPKLYYFQGRGRMESIRWLLATAGVEFEEEFLETREQYEKLQKDGCLLFGQVPLVEIDGMLLTQTRAILSYLAAKYNLYGKDLKERVRIDMYADGTQDLMMMIIGAPFKAPQEKEESLALAVKRAKNRYFPVFEKILKDHGEAFLVGNQLSWADIQLLEAILMVEEVSAPVLSDFPLLQAFKTRISNIPTIKKFLQPGSQRKPPPDGHYVDVVRTVLKF</sequence>
<gene>
    <name type="primary">Gsta4</name>
</gene>
<keyword id="KW-0007">Acetylation</keyword>
<keyword id="KW-0963">Cytoplasm</keyword>
<keyword id="KW-0903">Direct protein sequencing</keyword>
<keyword id="KW-1185">Reference proteome</keyword>
<keyword id="KW-0808">Transferase</keyword>
<dbReference type="EC" id="2.5.1.18"/>
<dbReference type="EMBL" id="X62660">
    <property type="protein sequence ID" value="CAB46530.1"/>
    <property type="molecule type" value="mRNA"/>
</dbReference>
<dbReference type="PIR" id="S23433">
    <property type="entry name" value="XURT8C"/>
</dbReference>
<dbReference type="RefSeq" id="NP_001100310.1">
    <property type="nucleotide sequence ID" value="NM_001106840.1"/>
</dbReference>
<dbReference type="RefSeq" id="XP_063121254.1">
    <property type="nucleotide sequence ID" value="XM_063265184.1"/>
</dbReference>
<dbReference type="SMR" id="P14942"/>
<dbReference type="BioGRID" id="256738">
    <property type="interactions" value="1"/>
</dbReference>
<dbReference type="FunCoup" id="P14942">
    <property type="interactions" value="205"/>
</dbReference>
<dbReference type="IntAct" id="P14942">
    <property type="interactions" value="2"/>
</dbReference>
<dbReference type="STRING" id="10116.ENSRNOP00000075572"/>
<dbReference type="iPTMnet" id="P14942"/>
<dbReference type="PhosphoSitePlus" id="P14942"/>
<dbReference type="jPOST" id="P14942"/>
<dbReference type="PaxDb" id="10116-ENSRNOP00000012346"/>
<dbReference type="Ensembl" id="ENSRNOT00000090146.2">
    <property type="protein sequence ID" value="ENSRNOP00000075572.1"/>
    <property type="gene ID" value="ENSRNOG00000030449.6"/>
</dbReference>
<dbReference type="GeneID" id="300850"/>
<dbReference type="KEGG" id="rno:300850"/>
<dbReference type="UCSC" id="RGD:1309970">
    <property type="organism name" value="rat"/>
</dbReference>
<dbReference type="AGR" id="RGD:1309970"/>
<dbReference type="CTD" id="2941"/>
<dbReference type="RGD" id="1309970">
    <property type="gene designation" value="Gsta4"/>
</dbReference>
<dbReference type="eggNOG" id="KOG1695">
    <property type="taxonomic scope" value="Eukaryota"/>
</dbReference>
<dbReference type="GeneTree" id="ENSGT00940000161750"/>
<dbReference type="InParanoid" id="P14942"/>
<dbReference type="OrthoDB" id="59870at9989"/>
<dbReference type="PhylomeDB" id="P14942"/>
<dbReference type="TreeFam" id="TF105321"/>
<dbReference type="PRO" id="PR:P14942"/>
<dbReference type="Proteomes" id="UP000002494">
    <property type="component" value="Chromosome 8"/>
</dbReference>
<dbReference type="Bgee" id="ENSRNOG00000030449">
    <property type="expression patterns" value="Expressed in ovary and 20 other cell types or tissues"/>
</dbReference>
<dbReference type="ExpressionAtlas" id="P14942">
    <property type="expression patterns" value="baseline and differential"/>
</dbReference>
<dbReference type="GO" id="GO:0005829">
    <property type="term" value="C:cytosol"/>
    <property type="evidence" value="ECO:0000266"/>
    <property type="project" value="RGD"/>
</dbReference>
<dbReference type="GO" id="GO:0005739">
    <property type="term" value="C:mitochondrion"/>
    <property type="evidence" value="ECO:0000266"/>
    <property type="project" value="RGD"/>
</dbReference>
<dbReference type="GO" id="GO:0004364">
    <property type="term" value="F:glutathione transferase activity"/>
    <property type="evidence" value="ECO:0000266"/>
    <property type="project" value="RGD"/>
</dbReference>
<dbReference type="GO" id="GO:0042802">
    <property type="term" value="F:identical protein binding"/>
    <property type="evidence" value="ECO:0000266"/>
    <property type="project" value="RGD"/>
</dbReference>
<dbReference type="GO" id="GO:0042803">
    <property type="term" value="F:protein homodimerization activity"/>
    <property type="evidence" value="ECO:0000266"/>
    <property type="project" value="RGD"/>
</dbReference>
<dbReference type="GO" id="GO:0015643">
    <property type="term" value="F:toxic substance binding"/>
    <property type="evidence" value="ECO:0000353"/>
    <property type="project" value="RGD"/>
</dbReference>
<dbReference type="GO" id="GO:0071285">
    <property type="term" value="P:cellular response to lithium ion"/>
    <property type="evidence" value="ECO:0000270"/>
    <property type="project" value="RGD"/>
</dbReference>
<dbReference type="GO" id="GO:0006749">
    <property type="term" value="P:glutathione metabolic process"/>
    <property type="evidence" value="ECO:0000266"/>
    <property type="project" value="RGD"/>
</dbReference>
<dbReference type="GO" id="GO:0009635">
    <property type="term" value="P:response to herbicide"/>
    <property type="evidence" value="ECO:0000270"/>
    <property type="project" value="RGD"/>
</dbReference>
<dbReference type="GO" id="GO:0035094">
    <property type="term" value="P:response to nicotine"/>
    <property type="evidence" value="ECO:0000270"/>
    <property type="project" value="RGD"/>
</dbReference>
<dbReference type="GO" id="GO:0010043">
    <property type="term" value="P:response to zinc ion"/>
    <property type="evidence" value="ECO:0000270"/>
    <property type="project" value="RGD"/>
</dbReference>
<dbReference type="GO" id="GO:0006805">
    <property type="term" value="P:xenobiotic metabolic process"/>
    <property type="evidence" value="ECO:0000266"/>
    <property type="project" value="RGD"/>
</dbReference>
<dbReference type="CDD" id="cd03208">
    <property type="entry name" value="GST_C_Alpha"/>
    <property type="match status" value="1"/>
</dbReference>
<dbReference type="FunFam" id="1.20.1050.10:FF:000005">
    <property type="entry name" value="Glutathione S-transferase A1"/>
    <property type="match status" value="1"/>
</dbReference>
<dbReference type="Gene3D" id="1.20.1050.10">
    <property type="match status" value="1"/>
</dbReference>
<dbReference type="Gene3D" id="3.40.30.10">
    <property type="entry name" value="Glutaredoxin"/>
    <property type="match status" value="1"/>
</dbReference>
<dbReference type="InterPro" id="IPR010987">
    <property type="entry name" value="Glutathione-S-Trfase_C-like"/>
</dbReference>
<dbReference type="InterPro" id="IPR036282">
    <property type="entry name" value="Glutathione-S-Trfase_C_sf"/>
</dbReference>
<dbReference type="InterPro" id="IPR040079">
    <property type="entry name" value="Glutathione_S-Trfase"/>
</dbReference>
<dbReference type="InterPro" id="IPR004045">
    <property type="entry name" value="Glutathione_S-Trfase_N"/>
</dbReference>
<dbReference type="InterPro" id="IPR003080">
    <property type="entry name" value="GST_alpha"/>
</dbReference>
<dbReference type="InterPro" id="IPR004046">
    <property type="entry name" value="GST_C"/>
</dbReference>
<dbReference type="InterPro" id="IPR050213">
    <property type="entry name" value="GST_superfamily"/>
</dbReference>
<dbReference type="InterPro" id="IPR036249">
    <property type="entry name" value="Thioredoxin-like_sf"/>
</dbReference>
<dbReference type="PANTHER" id="PTHR11571">
    <property type="entry name" value="GLUTATHIONE S-TRANSFERASE"/>
    <property type="match status" value="1"/>
</dbReference>
<dbReference type="PANTHER" id="PTHR11571:SF101">
    <property type="entry name" value="GLUTATHIONE S-TRANSFERASE A4"/>
    <property type="match status" value="1"/>
</dbReference>
<dbReference type="Pfam" id="PF00043">
    <property type="entry name" value="GST_C"/>
    <property type="match status" value="1"/>
</dbReference>
<dbReference type="Pfam" id="PF02798">
    <property type="entry name" value="GST_N"/>
    <property type="match status" value="1"/>
</dbReference>
<dbReference type="PRINTS" id="PR01266">
    <property type="entry name" value="GSTRNSFRASEA"/>
</dbReference>
<dbReference type="SFLD" id="SFLDG01205">
    <property type="entry name" value="AMPS.1"/>
    <property type="match status" value="1"/>
</dbReference>
<dbReference type="SFLD" id="SFLDS00019">
    <property type="entry name" value="Glutathione_Transferase_(cytos"/>
    <property type="match status" value="1"/>
</dbReference>
<dbReference type="SUPFAM" id="SSF47616">
    <property type="entry name" value="GST C-terminal domain-like"/>
    <property type="match status" value="1"/>
</dbReference>
<dbReference type="SUPFAM" id="SSF52833">
    <property type="entry name" value="Thioredoxin-like"/>
    <property type="match status" value="1"/>
</dbReference>
<dbReference type="PROSITE" id="PS50405">
    <property type="entry name" value="GST_CTER"/>
    <property type="match status" value="1"/>
</dbReference>
<dbReference type="PROSITE" id="PS50404">
    <property type="entry name" value="GST_NTER"/>
    <property type="match status" value="1"/>
</dbReference>
<protein>
    <recommendedName>
        <fullName>Glutathione S-transferase alpha-4</fullName>
        <ecNumber>2.5.1.18</ecNumber>
    </recommendedName>
    <alternativeName>
        <fullName>GST 8-8</fullName>
    </alternativeName>
    <alternativeName>
        <fullName>GST A4-4</fullName>
    </alternativeName>
    <alternativeName>
        <fullName>GST K</fullName>
    </alternativeName>
    <alternativeName>
        <fullName>Glutathione S-transferase Yk</fullName>
        <shortName>GST Yk</shortName>
    </alternativeName>
</protein>
<reference key="1">
    <citation type="journal article" date="1989" name="Biochem. J.">
        <title>Cytosolic glutathione transferases from rat liver. Primary structure of class alpha glutathione transferase 8-8 and characterization of low-abundance class Mu glutathione transferases.</title>
        <authorList>
            <person name="Alin P."/>
            <person name="Jensson H."/>
            <person name="Cederlund E."/>
            <person name="Joernvall H."/>
            <person name="Mannervik B."/>
        </authorList>
    </citation>
    <scope>PROTEIN SEQUENCE</scope>
    <scope>ACETYLATION AT MET-1</scope>
    <source>
        <tissue>Liver</tissue>
    </source>
</reference>
<reference key="2">
    <citation type="journal article" date="1992" name="Biochem. J.">
        <title>Cloning and heterologous expression of cDNA encoding class alpha rat glutathione transferase 8-8, an enzyme with high catalytic activity towards genotoxic alpha,beta-unsaturated carbonyl compounds.</title>
        <authorList>
            <person name="Stenberg G."/>
            <person name="Ridderstroem M."/>
            <person name="Engstroem A."/>
            <person name="Pemble S.E."/>
            <person name="Mannervik B."/>
        </authorList>
    </citation>
    <scope>NUCLEOTIDE SEQUENCE [MRNA]</scope>
    <source>
        <strain>Wistar</strain>
        <tissue>Hepatoma</tissue>
    </source>
</reference>
<proteinExistence type="evidence at protein level"/>
<feature type="chain" id="PRO_0000185795" description="Glutathione S-transferase alpha-4">
    <location>
        <begin position="1"/>
        <end position="222"/>
    </location>
</feature>
<feature type="domain" description="GST N-terminal">
    <location>
        <begin position="3"/>
        <end position="83"/>
    </location>
</feature>
<feature type="domain" description="GST C-terminal">
    <location>
        <begin position="85"/>
        <end position="208"/>
    </location>
</feature>
<feature type="binding site" evidence="1">
    <location>
        <position position="9"/>
    </location>
    <ligand>
        <name>glutathione</name>
        <dbReference type="ChEBI" id="CHEBI:57925"/>
    </ligand>
</feature>
<feature type="binding site" evidence="2">
    <location>
        <begin position="54"/>
        <end position="55"/>
    </location>
    <ligand>
        <name>glutathione</name>
        <dbReference type="ChEBI" id="CHEBI:57925"/>
    </ligand>
</feature>
<feature type="binding site" evidence="1">
    <location>
        <begin position="67"/>
        <end position="68"/>
    </location>
    <ligand>
        <name>glutathione</name>
        <dbReference type="ChEBI" id="CHEBI:57925"/>
    </ligand>
</feature>
<feature type="modified residue" description="N-acetylmethionine" evidence="3">
    <location>
        <position position="1"/>
    </location>
</feature>
<feature type="sequence conflict" description="In Ref. 1; AA sequence." evidence="4" ref="1">
    <original>S</original>
    <variation>V</variation>
    <location>
        <position position="18"/>
    </location>
</feature>
<feature type="sequence conflict" description="In Ref. 1; AA sequence." evidence="4" ref="1">
    <original>G</original>
    <variation>D</variation>
    <location>
        <position position="48"/>
    </location>
</feature>
<organism>
    <name type="scientific">Rattus norvegicus</name>
    <name type="common">Rat</name>
    <dbReference type="NCBI Taxonomy" id="10116"/>
    <lineage>
        <taxon>Eukaryota</taxon>
        <taxon>Metazoa</taxon>
        <taxon>Chordata</taxon>
        <taxon>Craniata</taxon>
        <taxon>Vertebrata</taxon>
        <taxon>Euteleostomi</taxon>
        <taxon>Mammalia</taxon>
        <taxon>Eutheria</taxon>
        <taxon>Euarchontoglires</taxon>
        <taxon>Glires</taxon>
        <taxon>Rodentia</taxon>
        <taxon>Myomorpha</taxon>
        <taxon>Muroidea</taxon>
        <taxon>Muridae</taxon>
        <taxon>Murinae</taxon>
        <taxon>Rattus</taxon>
    </lineage>
</organism>
<comment type="function">
    <text>Conjugation of reduced glutathione to a wide number of exogenous and endogenous hydrophobic electrophiles.</text>
</comment>
<comment type="catalytic activity">
    <reaction>
        <text>RX + glutathione = an S-substituted glutathione + a halide anion + H(+)</text>
        <dbReference type="Rhea" id="RHEA:16437"/>
        <dbReference type="ChEBI" id="CHEBI:15378"/>
        <dbReference type="ChEBI" id="CHEBI:16042"/>
        <dbReference type="ChEBI" id="CHEBI:17792"/>
        <dbReference type="ChEBI" id="CHEBI:57925"/>
        <dbReference type="ChEBI" id="CHEBI:90779"/>
        <dbReference type="EC" id="2.5.1.18"/>
    </reaction>
</comment>
<comment type="subunit">
    <text>Homodimer.</text>
</comment>
<comment type="subcellular location">
    <subcellularLocation>
        <location>Cytoplasm</location>
    </subcellularLocation>
</comment>
<comment type="similarity">
    <text evidence="4">Belongs to the GST superfamily. Alpha family.</text>
</comment>
<accession>P14942</accession>
<evidence type="ECO:0000250" key="1">
    <source>
        <dbReference type="UniProtKB" id="P13745"/>
    </source>
</evidence>
<evidence type="ECO:0000250" key="2">
    <source>
        <dbReference type="UniProtKB" id="P30711"/>
    </source>
</evidence>
<evidence type="ECO:0000269" key="3">
    <source>
    </source>
</evidence>
<evidence type="ECO:0000305" key="4"/>
<name>GSTA4_RAT</name>